<name>VKT1_PSERS</name>
<feature type="signal peptide" evidence="1">
    <location>
        <begin position="1"/>
        <end position="24"/>
    </location>
</feature>
<feature type="chain" id="PRO_0000429462" description="Kunitz serine protease inhibitor Pr-mulgin 1">
    <location>
        <begin position="25"/>
        <end position="83"/>
    </location>
</feature>
<feature type="domain" description="BPTI/Kunitz inhibitor" evidence="2">
    <location>
        <begin position="31"/>
        <end position="81"/>
    </location>
</feature>
<feature type="disulfide bond" evidence="2">
    <location>
        <begin position="31"/>
        <end position="81"/>
    </location>
</feature>
<feature type="disulfide bond" evidence="2">
    <location>
        <begin position="40"/>
        <end position="64"/>
    </location>
</feature>
<feature type="disulfide bond" evidence="2">
    <location>
        <begin position="56"/>
        <end position="77"/>
    </location>
</feature>
<feature type="mutagenesis site" description="Decrease in inhibitory activity on MMP-2." evidence="3">
    <original>TIE</original>
    <variation>SRG</variation>
    <location>
        <begin position="73"/>
        <end position="75"/>
    </location>
</feature>
<proteinExistence type="evidence at protein level"/>
<organism>
    <name type="scientific">Pseudechis rossignolii</name>
    <name type="common">Papuan pigmy mulga snake</name>
    <dbReference type="NCBI Taxonomy" id="1489342"/>
    <lineage>
        <taxon>Eukaryota</taxon>
        <taxon>Metazoa</taxon>
        <taxon>Chordata</taxon>
        <taxon>Craniata</taxon>
        <taxon>Vertebrata</taxon>
        <taxon>Euteleostomi</taxon>
        <taxon>Lepidosauria</taxon>
        <taxon>Squamata</taxon>
        <taxon>Bifurcata</taxon>
        <taxon>Unidentata</taxon>
        <taxon>Episquamata</taxon>
        <taxon>Toxicofera</taxon>
        <taxon>Serpentes</taxon>
        <taxon>Colubroidea</taxon>
        <taxon>Elapidae</taxon>
        <taxon>Hydrophiinae</taxon>
        <taxon>Pseudechis</taxon>
    </lineage>
</organism>
<sequence>MSSGGLLLLLGLLTLWEVLTPVSSKDRPRFCELPADPGPCNGLFQAFYYNPVQRKCLKFRYGGCKGNPNTFKTIEECKRTCAA</sequence>
<dbReference type="EMBL" id="AB576154">
    <property type="protein sequence ID" value="BAJ76674.1"/>
    <property type="molecule type" value="mRNA"/>
</dbReference>
<dbReference type="SMR" id="E7FL11"/>
<dbReference type="MEROPS" id="I02.052"/>
<dbReference type="GO" id="GO:0005615">
    <property type="term" value="C:extracellular space"/>
    <property type="evidence" value="ECO:0007669"/>
    <property type="project" value="TreeGrafter"/>
</dbReference>
<dbReference type="GO" id="GO:0004867">
    <property type="term" value="F:serine-type endopeptidase inhibitor activity"/>
    <property type="evidence" value="ECO:0007669"/>
    <property type="project" value="UniProtKB-KW"/>
</dbReference>
<dbReference type="GO" id="GO:0090729">
    <property type="term" value="F:toxin activity"/>
    <property type="evidence" value="ECO:0007669"/>
    <property type="project" value="UniProtKB-KW"/>
</dbReference>
<dbReference type="CDD" id="cd22594">
    <property type="entry name" value="Kunitz_textilinin-like"/>
    <property type="match status" value="1"/>
</dbReference>
<dbReference type="FunFam" id="4.10.410.10:FF:000021">
    <property type="entry name" value="Serine protease inhibitor, putative"/>
    <property type="match status" value="1"/>
</dbReference>
<dbReference type="Gene3D" id="4.10.410.10">
    <property type="entry name" value="Pancreatic trypsin inhibitor Kunitz domain"/>
    <property type="match status" value="1"/>
</dbReference>
<dbReference type="InterPro" id="IPR002223">
    <property type="entry name" value="Kunitz_BPTI"/>
</dbReference>
<dbReference type="InterPro" id="IPR036880">
    <property type="entry name" value="Kunitz_BPTI_sf"/>
</dbReference>
<dbReference type="InterPro" id="IPR020901">
    <property type="entry name" value="Prtase_inh_Kunz-CS"/>
</dbReference>
<dbReference type="InterPro" id="IPR050098">
    <property type="entry name" value="TFPI/VKTCI-like"/>
</dbReference>
<dbReference type="PANTHER" id="PTHR10083:SF374">
    <property type="entry name" value="BPTI_KUNITZ INHIBITOR DOMAIN-CONTAINING PROTEIN"/>
    <property type="match status" value="1"/>
</dbReference>
<dbReference type="PANTHER" id="PTHR10083">
    <property type="entry name" value="KUNITZ-TYPE PROTEASE INHIBITOR-RELATED"/>
    <property type="match status" value="1"/>
</dbReference>
<dbReference type="Pfam" id="PF00014">
    <property type="entry name" value="Kunitz_BPTI"/>
    <property type="match status" value="1"/>
</dbReference>
<dbReference type="PRINTS" id="PR00759">
    <property type="entry name" value="BASICPTASE"/>
</dbReference>
<dbReference type="SMART" id="SM00131">
    <property type="entry name" value="KU"/>
    <property type="match status" value="1"/>
</dbReference>
<dbReference type="SUPFAM" id="SSF57362">
    <property type="entry name" value="BPTI-like"/>
    <property type="match status" value="1"/>
</dbReference>
<dbReference type="PROSITE" id="PS00280">
    <property type="entry name" value="BPTI_KUNITZ_1"/>
    <property type="match status" value="1"/>
</dbReference>
<dbReference type="PROSITE" id="PS50279">
    <property type="entry name" value="BPTI_KUNITZ_2"/>
    <property type="match status" value="1"/>
</dbReference>
<keyword id="KW-1015">Disulfide bond</keyword>
<keyword id="KW-0646">Protease inhibitor</keyword>
<keyword id="KW-0964">Secreted</keyword>
<keyword id="KW-0722">Serine protease inhibitor</keyword>
<keyword id="KW-0732">Signal</keyword>
<keyword id="KW-0800">Toxin</keyword>
<evidence type="ECO:0000255" key="1"/>
<evidence type="ECO:0000255" key="2">
    <source>
        <dbReference type="PROSITE-ProRule" id="PRU00031"/>
    </source>
</evidence>
<evidence type="ECO:0000269" key="3">
    <source>
    </source>
</evidence>
<evidence type="ECO:0000269" key="4">
    <source>
    </source>
</evidence>
<evidence type="ECO:0000303" key="5">
    <source>
    </source>
</evidence>
<evidence type="ECO:0000305" key="6"/>
<evidence type="ECO:0000305" key="7">
    <source>
    </source>
</evidence>
<accession>E7FL11</accession>
<reference key="1">
    <citation type="journal article" date="2012" name="Toxicon">
        <title>Functional characterization of Kunitz-type protease inhibitor Pr-mulgins identified from New Guinean Pseudechis australis.</title>
        <authorList>
            <person name="Inagaki H."/>
            <person name="Kimoto H."/>
            <person name="Yamauchi Y."/>
            <person name="Toriba M."/>
            <person name="Kubo T."/>
        </authorList>
    </citation>
    <scope>NUCLEOTIDE SEQUENCE [MRNA]</scope>
    <scope>FUNCTION</scope>
    <scope>MUTAGENESIS OF 73-THR--GLY-75</scope>
    <source>
        <tissue>Venom gland</tissue>
    </source>
</reference>
<reference key="2">
    <citation type="journal article" date="2022" name="Br. J. Pharmacol.">
        <title>A new Kunitz-type snake toxin family associated with an original mode of interaction with the vasopressin 2 receptor.</title>
        <authorList>
            <person name="Droctove L."/>
            <person name="Ciolek J."/>
            <person name="Mendre C."/>
            <person name="Chorfa A."/>
            <person name="Huerta P."/>
            <person name="Carvalho C."/>
            <person name="Gouin C."/>
            <person name="Lancien M."/>
            <person name="Stanajic-Petrovic G."/>
            <person name="Braco L."/>
            <person name="Blanchet G."/>
            <person name="Upert G."/>
            <person name="De Pauw G."/>
            <person name="Barbe P."/>
            <person name="Keck M."/>
            <person name="Mourier G."/>
            <person name="Mouillac B."/>
            <person name="Denis S."/>
            <person name="Rodriguez de la Vega R.C."/>
            <person name="Quinton L."/>
            <person name="Gilles N."/>
        </authorList>
    </citation>
    <scope>SYNTHESIS</scope>
</reference>
<comment type="function">
    <text evidence="3">Specifically inhibits MMP2 activity (EC(50)=100 nM and Ki=60 nM).</text>
</comment>
<comment type="subcellular location">
    <subcellularLocation>
        <location evidence="7">Secreted</location>
    </subcellularLocation>
</comment>
<comment type="tissue specificity">
    <text evidence="7">Expressed by the venom gland.</text>
</comment>
<comment type="miscellaneous">
    <text evidence="3 4">Negative results: does not inhibit serine proteases (trypsin, chymotrypsin, elastase, kallikrein, plasmin and pepsin), cysteine protease (cathepsin G), and MMP (1, 3, 7, 8, 9, 10, 12, 13, and 14), as well as voltage-gated potassium channels (Shaker, Shal, Shaw, and rKv1.1/KCNA1) (PubMed:22024014). Does not inhibit vasopressin V2 receptor (V2R/AVPR2) (PubMed:35122240).</text>
</comment>
<comment type="similarity">
    <text evidence="6">Belongs to the venom Kunitz-type family.</text>
</comment>
<protein>
    <recommendedName>
        <fullName evidence="5">Kunitz serine protease inhibitor Pr-mulgin 1</fullName>
    </recommendedName>
</protein>